<gene>
    <name evidence="1" type="primary">atpE</name>
    <name type="ordered locus">CPF_2457</name>
</gene>
<proteinExistence type="inferred from homology"/>
<comment type="function">
    <text evidence="1">F(1)F(0) ATP synthase produces ATP from ADP in the presence of a proton or sodium gradient. F-type ATPases consist of two structural domains, F(1) containing the extramembraneous catalytic core and F(0) containing the membrane proton channel, linked together by a central stalk and a peripheral stalk. During catalysis, ATP synthesis in the catalytic domain of F(1) is coupled via a rotary mechanism of the central stalk subunits to proton translocation.</text>
</comment>
<comment type="function">
    <text evidence="1">Key component of the F(0) channel; it plays a direct role in translocation across the membrane. A homomeric c-ring of between 10-14 subunits forms the central stalk rotor element with the F(1) delta and epsilon subunits.</text>
</comment>
<comment type="subunit">
    <text evidence="1">F-type ATPases have 2 components, F(1) - the catalytic core - and F(0) - the membrane proton channel. F(1) has five subunits: alpha(3), beta(3), gamma(1), delta(1), epsilon(1). F(0) has three main subunits: a(1), b(2) and c(10-14). The alpha and beta chains form an alternating ring which encloses part of the gamma chain. F(1) is attached to F(0) by a central stalk formed by the gamma and epsilon chains, while a peripheral stalk is formed by the delta and b chains.</text>
</comment>
<comment type="subcellular location">
    <subcellularLocation>
        <location evidence="1">Cell membrane</location>
        <topology evidence="1">Multi-pass membrane protein</topology>
    </subcellularLocation>
</comment>
<comment type="similarity">
    <text evidence="1">Belongs to the ATPase C chain family.</text>
</comment>
<keyword id="KW-0066">ATP synthesis</keyword>
<keyword id="KW-1003">Cell membrane</keyword>
<keyword id="KW-0138">CF(0)</keyword>
<keyword id="KW-0375">Hydrogen ion transport</keyword>
<keyword id="KW-0406">Ion transport</keyword>
<keyword id="KW-0446">Lipid-binding</keyword>
<keyword id="KW-0472">Membrane</keyword>
<keyword id="KW-0812">Transmembrane</keyword>
<keyword id="KW-1133">Transmembrane helix</keyword>
<keyword id="KW-0813">Transport</keyword>
<evidence type="ECO:0000255" key="1">
    <source>
        <dbReference type="HAMAP-Rule" id="MF_01396"/>
    </source>
</evidence>
<feature type="chain" id="PRO_0000365874" description="ATP synthase subunit c">
    <location>
        <begin position="1"/>
        <end position="72"/>
    </location>
</feature>
<feature type="transmembrane region" description="Helical" evidence="1">
    <location>
        <begin position="5"/>
        <end position="25"/>
    </location>
</feature>
<feature type="transmembrane region" description="Helical" evidence="1">
    <location>
        <begin position="51"/>
        <end position="71"/>
    </location>
</feature>
<feature type="site" description="Reversibly protonated during proton transport" evidence="1">
    <location>
        <position position="55"/>
    </location>
</feature>
<reference key="1">
    <citation type="journal article" date="2006" name="Genome Res.">
        <title>Skewed genomic variability in strains of the toxigenic bacterial pathogen, Clostridium perfringens.</title>
        <authorList>
            <person name="Myers G.S.A."/>
            <person name="Rasko D.A."/>
            <person name="Cheung J.K."/>
            <person name="Ravel J."/>
            <person name="Seshadri R."/>
            <person name="DeBoy R.T."/>
            <person name="Ren Q."/>
            <person name="Varga J."/>
            <person name="Awad M.M."/>
            <person name="Brinkac L.M."/>
            <person name="Daugherty S.C."/>
            <person name="Haft D.H."/>
            <person name="Dodson R.J."/>
            <person name="Madupu R."/>
            <person name="Nelson W.C."/>
            <person name="Rosovitz M.J."/>
            <person name="Sullivan S.A."/>
            <person name="Khouri H."/>
            <person name="Dimitrov G.I."/>
            <person name="Watkins K.L."/>
            <person name="Mulligan S."/>
            <person name="Benton J."/>
            <person name="Radune D."/>
            <person name="Fisher D.J."/>
            <person name="Atkins H.S."/>
            <person name="Hiscox T."/>
            <person name="Jost B.H."/>
            <person name="Billington S.J."/>
            <person name="Songer J.G."/>
            <person name="McClane B.A."/>
            <person name="Titball R.W."/>
            <person name="Rood J.I."/>
            <person name="Melville S.B."/>
            <person name="Paulsen I.T."/>
        </authorList>
    </citation>
    <scope>NUCLEOTIDE SEQUENCE [LARGE SCALE GENOMIC DNA]</scope>
    <source>
        <strain>ATCC 13124 / DSM 756 / JCM 1290 / NCIMB 6125 / NCTC 8237 / S 107 / Type A</strain>
    </source>
</reference>
<accession>Q0TNB9</accession>
<organism>
    <name type="scientific">Clostridium perfringens (strain ATCC 13124 / DSM 756 / JCM 1290 / NCIMB 6125 / NCTC 8237 / Type A)</name>
    <dbReference type="NCBI Taxonomy" id="195103"/>
    <lineage>
        <taxon>Bacteria</taxon>
        <taxon>Bacillati</taxon>
        <taxon>Bacillota</taxon>
        <taxon>Clostridia</taxon>
        <taxon>Eubacteriales</taxon>
        <taxon>Clostridiaceae</taxon>
        <taxon>Clostridium</taxon>
    </lineage>
</organism>
<name>ATPL_CLOP1</name>
<dbReference type="EMBL" id="CP000246">
    <property type="protein sequence ID" value="ABG84164.1"/>
    <property type="molecule type" value="Genomic_DNA"/>
</dbReference>
<dbReference type="RefSeq" id="WP_003452423.1">
    <property type="nucleotide sequence ID" value="NC_008261.1"/>
</dbReference>
<dbReference type="SMR" id="Q0TNB9"/>
<dbReference type="STRING" id="195103.CPF_2457"/>
<dbReference type="PaxDb" id="195103-CPF_2457"/>
<dbReference type="GeneID" id="93001265"/>
<dbReference type="KEGG" id="cpf:CPF_2457"/>
<dbReference type="eggNOG" id="COG0636">
    <property type="taxonomic scope" value="Bacteria"/>
</dbReference>
<dbReference type="HOGENOM" id="CLU_148047_2_1_9"/>
<dbReference type="Proteomes" id="UP000001823">
    <property type="component" value="Chromosome"/>
</dbReference>
<dbReference type="GO" id="GO:0005886">
    <property type="term" value="C:plasma membrane"/>
    <property type="evidence" value="ECO:0007669"/>
    <property type="project" value="UniProtKB-SubCell"/>
</dbReference>
<dbReference type="GO" id="GO:0045259">
    <property type="term" value="C:proton-transporting ATP synthase complex"/>
    <property type="evidence" value="ECO:0007669"/>
    <property type="project" value="UniProtKB-KW"/>
</dbReference>
<dbReference type="GO" id="GO:0033177">
    <property type="term" value="C:proton-transporting two-sector ATPase complex, proton-transporting domain"/>
    <property type="evidence" value="ECO:0007669"/>
    <property type="project" value="InterPro"/>
</dbReference>
<dbReference type="GO" id="GO:0008289">
    <property type="term" value="F:lipid binding"/>
    <property type="evidence" value="ECO:0007669"/>
    <property type="project" value="UniProtKB-KW"/>
</dbReference>
<dbReference type="GO" id="GO:0046933">
    <property type="term" value="F:proton-transporting ATP synthase activity, rotational mechanism"/>
    <property type="evidence" value="ECO:0007669"/>
    <property type="project" value="UniProtKB-UniRule"/>
</dbReference>
<dbReference type="FunFam" id="1.20.20.10:FF:000002">
    <property type="entry name" value="ATP synthase subunit c"/>
    <property type="match status" value="1"/>
</dbReference>
<dbReference type="Gene3D" id="1.20.20.10">
    <property type="entry name" value="F1F0 ATP synthase subunit C"/>
    <property type="match status" value="1"/>
</dbReference>
<dbReference type="HAMAP" id="MF_01396">
    <property type="entry name" value="ATP_synth_c_bact"/>
    <property type="match status" value="1"/>
</dbReference>
<dbReference type="InterPro" id="IPR005953">
    <property type="entry name" value="ATP_synth_csu_bac/chlpt"/>
</dbReference>
<dbReference type="InterPro" id="IPR000454">
    <property type="entry name" value="ATP_synth_F0_csu"/>
</dbReference>
<dbReference type="InterPro" id="IPR020537">
    <property type="entry name" value="ATP_synth_F0_csu_DDCD_BS"/>
</dbReference>
<dbReference type="InterPro" id="IPR038662">
    <property type="entry name" value="ATP_synth_F0_csu_sf"/>
</dbReference>
<dbReference type="InterPro" id="IPR002379">
    <property type="entry name" value="ATPase_proteolipid_c-like_dom"/>
</dbReference>
<dbReference type="InterPro" id="IPR035921">
    <property type="entry name" value="F/V-ATP_Csub_sf"/>
</dbReference>
<dbReference type="NCBIfam" id="TIGR01260">
    <property type="entry name" value="ATP_synt_c"/>
    <property type="match status" value="1"/>
</dbReference>
<dbReference type="PANTHER" id="PTHR10031">
    <property type="entry name" value="ATP SYNTHASE LIPID-BINDING PROTEIN, MITOCHONDRIAL"/>
    <property type="match status" value="1"/>
</dbReference>
<dbReference type="PANTHER" id="PTHR10031:SF0">
    <property type="entry name" value="ATPASE PROTEIN 9"/>
    <property type="match status" value="1"/>
</dbReference>
<dbReference type="Pfam" id="PF00137">
    <property type="entry name" value="ATP-synt_C"/>
    <property type="match status" value="1"/>
</dbReference>
<dbReference type="PRINTS" id="PR00124">
    <property type="entry name" value="ATPASEC"/>
</dbReference>
<dbReference type="SUPFAM" id="SSF81333">
    <property type="entry name" value="F1F0 ATP synthase subunit C"/>
    <property type="match status" value="1"/>
</dbReference>
<dbReference type="PROSITE" id="PS00605">
    <property type="entry name" value="ATPASE_C"/>
    <property type="match status" value="1"/>
</dbReference>
<sequence length="72" mass="7087">MDMKLLAAGIAVLAGIGAGIGIGIATAGALEATARQPEASDKIQSLFIMGAGLSEATAIYGLVVSIILLFVA</sequence>
<protein>
    <recommendedName>
        <fullName evidence="1">ATP synthase subunit c</fullName>
    </recommendedName>
    <alternativeName>
        <fullName evidence="1">ATP synthase F(0) sector subunit c</fullName>
    </alternativeName>
    <alternativeName>
        <fullName evidence="1">F-type ATPase subunit c</fullName>
        <shortName evidence="1">F-ATPase subunit c</shortName>
    </alternativeName>
    <alternativeName>
        <fullName evidence="1">Lipid-binding protein</fullName>
    </alternativeName>
</protein>